<accession>B5G1P1</accession>
<accession>B5G1N8</accession>
<accession>B5G1P0</accession>
<protein>
    <recommendedName>
        <fullName>Intraflagellar transport protein 43 homolog</fullName>
    </recommendedName>
</protein>
<gene>
    <name type="primary">IFT43</name>
</gene>
<dbReference type="EMBL" id="DQ215670">
    <property type="protein sequence ID" value="ACH45199.1"/>
    <property type="molecule type" value="mRNA"/>
</dbReference>
<dbReference type="EMBL" id="DQ215671">
    <property type="protein sequence ID" value="ACH45200.1"/>
    <property type="molecule type" value="mRNA"/>
</dbReference>
<dbReference type="EMBL" id="DQ215672">
    <property type="protein sequence ID" value="ACH45201.1"/>
    <property type="status" value="ALT_INIT"/>
    <property type="molecule type" value="mRNA"/>
</dbReference>
<dbReference type="EMBL" id="DQ215673">
    <property type="protein sequence ID" value="ACH45202.1"/>
    <property type="molecule type" value="mRNA"/>
</dbReference>
<dbReference type="RefSeq" id="NP_001232603.1">
    <property type="nucleotide sequence ID" value="NM_001245674.1"/>
</dbReference>
<dbReference type="SMR" id="B5G1P1"/>
<dbReference type="STRING" id="59729.ENSTGUP00000019541"/>
<dbReference type="GeneID" id="100190405"/>
<dbReference type="KEGG" id="tgu:100190405"/>
<dbReference type="CTD" id="112752"/>
<dbReference type="InParanoid" id="B5G1P1"/>
<dbReference type="OrthoDB" id="206950at2759"/>
<dbReference type="Proteomes" id="UP000007754">
    <property type="component" value="Unplaced"/>
</dbReference>
<dbReference type="GO" id="GO:0005929">
    <property type="term" value="C:cilium"/>
    <property type="evidence" value="ECO:0000250"/>
    <property type="project" value="UniProtKB"/>
</dbReference>
<dbReference type="GO" id="GO:0005737">
    <property type="term" value="C:cytoplasm"/>
    <property type="evidence" value="ECO:0007669"/>
    <property type="project" value="UniProtKB-KW"/>
</dbReference>
<dbReference type="GO" id="GO:0005856">
    <property type="term" value="C:cytoskeleton"/>
    <property type="evidence" value="ECO:0007669"/>
    <property type="project" value="UniProtKB-SubCell"/>
</dbReference>
<dbReference type="GO" id="GO:0030991">
    <property type="term" value="C:intraciliary transport particle A"/>
    <property type="evidence" value="ECO:0000250"/>
    <property type="project" value="UniProtKB"/>
</dbReference>
<dbReference type="GO" id="GO:0060271">
    <property type="term" value="P:cilium assembly"/>
    <property type="evidence" value="ECO:0000250"/>
    <property type="project" value="UniProtKB"/>
</dbReference>
<dbReference type="GO" id="GO:0035721">
    <property type="term" value="P:intraciliary retrograde transport"/>
    <property type="evidence" value="ECO:0000250"/>
    <property type="project" value="UniProtKB"/>
</dbReference>
<dbReference type="InterPro" id="IPR029302">
    <property type="entry name" value="IFT43"/>
</dbReference>
<dbReference type="PANTHER" id="PTHR33724">
    <property type="entry name" value="INTRAFLAGELLAR TRANSPORT PROTEIN 43 HOMOLOG"/>
    <property type="match status" value="1"/>
</dbReference>
<dbReference type="PANTHER" id="PTHR33724:SF1">
    <property type="entry name" value="INTRAFLAGELLAR TRANSPORT PROTEIN 43 HOMOLOG"/>
    <property type="match status" value="1"/>
</dbReference>
<dbReference type="Pfam" id="PF15305">
    <property type="entry name" value="IFT43"/>
    <property type="match status" value="1"/>
</dbReference>
<evidence type="ECO:0000250" key="1">
    <source>
        <dbReference type="UniProtKB" id="Q96FT9"/>
    </source>
</evidence>
<evidence type="ECO:0000256" key="2">
    <source>
        <dbReference type="SAM" id="MobiDB-lite"/>
    </source>
</evidence>
<evidence type="ECO:0000305" key="3"/>
<organism>
    <name type="scientific">Taeniopygia guttata</name>
    <name type="common">Zebra finch</name>
    <name type="synonym">Poephila guttata</name>
    <dbReference type="NCBI Taxonomy" id="59729"/>
    <lineage>
        <taxon>Eukaryota</taxon>
        <taxon>Metazoa</taxon>
        <taxon>Chordata</taxon>
        <taxon>Craniata</taxon>
        <taxon>Vertebrata</taxon>
        <taxon>Euteleostomi</taxon>
        <taxon>Archelosauria</taxon>
        <taxon>Archosauria</taxon>
        <taxon>Dinosauria</taxon>
        <taxon>Saurischia</taxon>
        <taxon>Theropoda</taxon>
        <taxon>Coelurosauria</taxon>
        <taxon>Aves</taxon>
        <taxon>Neognathae</taxon>
        <taxon>Neoaves</taxon>
        <taxon>Telluraves</taxon>
        <taxon>Australaves</taxon>
        <taxon>Passeriformes</taxon>
        <taxon>Passeroidea</taxon>
        <taxon>Estrildidae</taxon>
        <taxon>Estrildinae</taxon>
        <taxon>Taeniopygia</taxon>
    </lineage>
</organism>
<feature type="chain" id="PRO_0000409495" description="Intraflagellar transport protein 43 homolog">
    <location>
        <begin position="1"/>
        <end position="204"/>
    </location>
</feature>
<feature type="region of interest" description="Disordered" evidence="2">
    <location>
        <begin position="1"/>
        <end position="103"/>
    </location>
</feature>
<feature type="compositionally biased region" description="Basic and acidic residues" evidence="2">
    <location>
        <begin position="1"/>
        <end position="12"/>
    </location>
</feature>
<feature type="compositionally biased region" description="Basic and acidic residues" evidence="2">
    <location>
        <begin position="75"/>
        <end position="85"/>
    </location>
</feature>
<feature type="sequence conflict" description="In Ref. 1; ACH45202." evidence="3" ref="1">
    <original>S</original>
    <variation>C</variation>
    <location>
        <position position="45"/>
    </location>
</feature>
<sequence length="204" mass="22785">MEAEPERAEAPRRGGVAAVLKMGRRARQDIFAGENLSRKNSPSASLGEVPPPKPPRRQGGWADDPVLAPTKSGRKHAEEVEDHRLRQQSLEASDDGGDIPVIPDLEDVQDEDLAMQVAAPPSVQVNRVLTYHDLDKDLMKYAAFQTLDGEVDLKLLTKVLAPEHELREDDVSWDWDHLFTEVSSELVTEWDLGQSEREDHISLP</sequence>
<reference key="1">
    <citation type="journal article" date="2006" name="Proc. Natl. Acad. Sci. U.S.A.">
        <title>A molecular neuroethological approach for identifying and characterizing a cascade of behaviorally regulated genes.</title>
        <authorList>
            <person name="Wada K."/>
            <person name="Howard J.T."/>
            <person name="McConnell P."/>
            <person name="Whitney O."/>
            <person name="Lints T."/>
            <person name="Rivas M.V."/>
            <person name="Horita H."/>
            <person name="Patterson M.A."/>
            <person name="White S.A."/>
            <person name="Scharff C."/>
            <person name="Haesler S."/>
            <person name="Zhao S."/>
            <person name="Sakaguchi H."/>
            <person name="Hagiwara M."/>
            <person name="Shiraki T."/>
            <person name="Hirozane-Kishikawa T."/>
            <person name="Skene P."/>
            <person name="Hayashizaki Y."/>
            <person name="Carninci P."/>
            <person name="Jarvis E.D."/>
        </authorList>
    </citation>
    <scope>NUCLEOTIDE SEQUENCE [LARGE SCALE MRNA]</scope>
    <source>
        <tissue>Brain</tissue>
    </source>
</reference>
<name>IFT43_TAEGU</name>
<keyword id="KW-0966">Cell projection</keyword>
<keyword id="KW-0970">Cilium biogenesis/degradation</keyword>
<keyword id="KW-0963">Cytoplasm</keyword>
<keyword id="KW-0206">Cytoskeleton</keyword>
<keyword id="KW-1185">Reference proteome</keyword>
<proteinExistence type="evidence at transcript level"/>
<comment type="function">
    <text evidence="1">As a component of IFT complex A (IFT-A), a complex required for retrograde ciliary transport and entry into cilia of G protein-coupled receptors (GPCRs), it is involved in ciliogenesis. Involved in retrograde ciliary transport along microtubules from the ciliary tip to the base.</text>
</comment>
<comment type="subunit">
    <text evidence="1">Component of the IFT complex A (IFT-A) complex.</text>
</comment>
<comment type="subcellular location">
    <subcellularLocation>
        <location evidence="1">Cytoplasm</location>
        <location evidence="1">Cytoskeleton</location>
    </subcellularLocation>
    <subcellularLocation>
        <location evidence="1">Cell projection</location>
        <location evidence="1">Cilium</location>
    </subcellularLocation>
    <text evidence="1">Associated with microtubules. Localized at the distal tip of the cilium.</text>
</comment>
<comment type="similarity">
    <text evidence="3">Belongs to the IFT43 family.</text>
</comment>
<comment type="sequence caution" evidence="3">
    <conflict type="erroneous initiation">
        <sequence resource="EMBL-CDS" id="ACH45201"/>
    </conflict>
    <text>Truncated N-terminus.</text>
</comment>